<accession>Q04V49</accession>
<keyword id="KW-0067">ATP-binding</keyword>
<keyword id="KW-0418">Kinase</keyword>
<keyword id="KW-0460">Magnesium</keyword>
<keyword id="KW-0479">Metal-binding</keyword>
<keyword id="KW-0547">Nucleotide-binding</keyword>
<keyword id="KW-0784">Thiamine biosynthesis</keyword>
<keyword id="KW-0808">Transferase</keyword>
<dbReference type="EC" id="2.7.1.50" evidence="1"/>
<dbReference type="EMBL" id="CP000350">
    <property type="protein sequence ID" value="ABJ75221.1"/>
    <property type="molecule type" value="Genomic_DNA"/>
</dbReference>
<dbReference type="RefSeq" id="WP_002738770.1">
    <property type="nucleotide sequence ID" value="NC_008510.1"/>
</dbReference>
<dbReference type="SMR" id="Q04V49"/>
<dbReference type="KEGG" id="lbj:LBJ_0526"/>
<dbReference type="HOGENOM" id="CLU_019943_0_1_12"/>
<dbReference type="UniPathway" id="UPA00060">
    <property type="reaction ID" value="UER00139"/>
</dbReference>
<dbReference type="Proteomes" id="UP000000656">
    <property type="component" value="Chromosome 1"/>
</dbReference>
<dbReference type="GO" id="GO:0005524">
    <property type="term" value="F:ATP binding"/>
    <property type="evidence" value="ECO:0007669"/>
    <property type="project" value="UniProtKB-UniRule"/>
</dbReference>
<dbReference type="GO" id="GO:0004417">
    <property type="term" value="F:hydroxyethylthiazole kinase activity"/>
    <property type="evidence" value="ECO:0007669"/>
    <property type="project" value="UniProtKB-UniRule"/>
</dbReference>
<dbReference type="GO" id="GO:0000287">
    <property type="term" value="F:magnesium ion binding"/>
    <property type="evidence" value="ECO:0007669"/>
    <property type="project" value="UniProtKB-UniRule"/>
</dbReference>
<dbReference type="GO" id="GO:0009228">
    <property type="term" value="P:thiamine biosynthetic process"/>
    <property type="evidence" value="ECO:0007669"/>
    <property type="project" value="UniProtKB-KW"/>
</dbReference>
<dbReference type="GO" id="GO:0009229">
    <property type="term" value="P:thiamine diphosphate biosynthetic process"/>
    <property type="evidence" value="ECO:0007669"/>
    <property type="project" value="UniProtKB-UniRule"/>
</dbReference>
<dbReference type="CDD" id="cd01170">
    <property type="entry name" value="THZ_kinase"/>
    <property type="match status" value="1"/>
</dbReference>
<dbReference type="Gene3D" id="3.40.1190.20">
    <property type="match status" value="1"/>
</dbReference>
<dbReference type="HAMAP" id="MF_00228">
    <property type="entry name" value="Thz_kinase"/>
    <property type="match status" value="1"/>
</dbReference>
<dbReference type="InterPro" id="IPR000417">
    <property type="entry name" value="Hyethyz_kinase"/>
</dbReference>
<dbReference type="InterPro" id="IPR029056">
    <property type="entry name" value="Ribokinase-like"/>
</dbReference>
<dbReference type="NCBIfam" id="NF006830">
    <property type="entry name" value="PRK09355.1"/>
    <property type="match status" value="1"/>
</dbReference>
<dbReference type="NCBIfam" id="TIGR00694">
    <property type="entry name" value="thiM"/>
    <property type="match status" value="1"/>
</dbReference>
<dbReference type="Pfam" id="PF02110">
    <property type="entry name" value="HK"/>
    <property type="match status" value="1"/>
</dbReference>
<dbReference type="PIRSF" id="PIRSF000513">
    <property type="entry name" value="Thz_kinase"/>
    <property type="match status" value="1"/>
</dbReference>
<dbReference type="PRINTS" id="PR01099">
    <property type="entry name" value="HYETHTZKNASE"/>
</dbReference>
<dbReference type="SUPFAM" id="SSF53613">
    <property type="entry name" value="Ribokinase-like"/>
    <property type="match status" value="1"/>
</dbReference>
<feature type="chain" id="PRO_1000021516" description="Hydroxyethylthiazole kinase">
    <location>
        <begin position="1"/>
        <end position="264"/>
    </location>
</feature>
<feature type="binding site" evidence="1">
    <location>
        <position position="55"/>
    </location>
    <ligand>
        <name>substrate</name>
    </ligand>
</feature>
<feature type="binding site" evidence="1">
    <location>
        <position position="130"/>
    </location>
    <ligand>
        <name>ATP</name>
        <dbReference type="ChEBI" id="CHEBI:30616"/>
    </ligand>
</feature>
<feature type="binding site" evidence="1">
    <location>
        <position position="176"/>
    </location>
    <ligand>
        <name>ATP</name>
        <dbReference type="ChEBI" id="CHEBI:30616"/>
    </ligand>
</feature>
<feature type="binding site" evidence="1">
    <location>
        <position position="203"/>
    </location>
    <ligand>
        <name>substrate</name>
    </ligand>
</feature>
<reference key="1">
    <citation type="journal article" date="2006" name="Proc. Natl. Acad. Sci. U.S.A.">
        <title>Genome reduction in Leptospira borgpetersenii reflects limited transmission potential.</title>
        <authorList>
            <person name="Bulach D.M."/>
            <person name="Zuerner R.L."/>
            <person name="Wilson P."/>
            <person name="Seemann T."/>
            <person name="McGrath A."/>
            <person name="Cullen P.A."/>
            <person name="Davis J."/>
            <person name="Johnson M."/>
            <person name="Kuczek E."/>
            <person name="Alt D.P."/>
            <person name="Peterson-Burch B."/>
            <person name="Coppel R.L."/>
            <person name="Rood J.I."/>
            <person name="Davies J.K."/>
            <person name="Adler B."/>
        </authorList>
    </citation>
    <scope>NUCLEOTIDE SEQUENCE [LARGE SCALE GENOMIC DNA]</scope>
    <source>
        <strain>JB197</strain>
    </source>
</reference>
<name>THIM_LEPBJ</name>
<comment type="function">
    <text evidence="1">Catalyzes the phosphorylation of the hydroxyl group of 4-methyl-5-beta-hydroxyethylthiazole (THZ).</text>
</comment>
<comment type="catalytic activity">
    <reaction evidence="1">
        <text>5-(2-hydroxyethyl)-4-methylthiazole + ATP = 4-methyl-5-(2-phosphooxyethyl)-thiazole + ADP + H(+)</text>
        <dbReference type="Rhea" id="RHEA:24212"/>
        <dbReference type="ChEBI" id="CHEBI:15378"/>
        <dbReference type="ChEBI" id="CHEBI:17957"/>
        <dbReference type="ChEBI" id="CHEBI:30616"/>
        <dbReference type="ChEBI" id="CHEBI:58296"/>
        <dbReference type="ChEBI" id="CHEBI:456216"/>
        <dbReference type="EC" id="2.7.1.50"/>
    </reaction>
</comment>
<comment type="cofactor">
    <cofactor evidence="1">
        <name>Mg(2+)</name>
        <dbReference type="ChEBI" id="CHEBI:18420"/>
    </cofactor>
</comment>
<comment type="pathway">
    <text evidence="1">Cofactor biosynthesis; thiamine diphosphate biosynthesis; 4-methyl-5-(2-phosphoethyl)-thiazole from 5-(2-hydroxyethyl)-4-methylthiazole: step 1/1.</text>
</comment>
<comment type="similarity">
    <text evidence="1">Belongs to the Thz kinase family.</text>
</comment>
<protein>
    <recommendedName>
        <fullName evidence="1">Hydroxyethylthiazole kinase</fullName>
        <ecNumber evidence="1">2.7.1.50</ecNumber>
    </recommendedName>
    <alternativeName>
        <fullName evidence="1">4-methyl-5-beta-hydroxyethylthiazole kinase</fullName>
        <shortName evidence="1">TH kinase</shortName>
        <shortName evidence="1">Thz kinase</shortName>
    </alternativeName>
</protein>
<evidence type="ECO:0000255" key="1">
    <source>
        <dbReference type="HAMAP-Rule" id="MF_00228"/>
    </source>
</evidence>
<sequence length="264" mass="27495">MPKHSALERAWPAKEIVEDLLELRKRSPLTHIMTNIVVTNWTANVLLAVGASPAMVIAEEEAGEFVKIANGLLINVGTITSNDAKAMKIAATVAHQTNTPWVLDPVAVGALGFRTETTKKLLDLKPTVIRGNASEILTLAGIAGKGKGVDSTVNSKDALPYAQELSGKTGAVVAVSGEVDYVTNGKETIEIYGGDPIMTKVTGVGCSLGALIASFLGIQKDPLRASASASAVFAIAGSRSAKKSNGPGSFAINFIDQLSQLSIE</sequence>
<gene>
    <name evidence="1" type="primary">thiM</name>
    <name type="ordered locus">LBJ_0526</name>
</gene>
<organism>
    <name type="scientific">Leptospira borgpetersenii serovar Hardjo-bovis (strain JB197)</name>
    <dbReference type="NCBI Taxonomy" id="355277"/>
    <lineage>
        <taxon>Bacteria</taxon>
        <taxon>Pseudomonadati</taxon>
        <taxon>Spirochaetota</taxon>
        <taxon>Spirochaetia</taxon>
        <taxon>Leptospirales</taxon>
        <taxon>Leptospiraceae</taxon>
        <taxon>Leptospira</taxon>
    </lineage>
</organism>
<proteinExistence type="inferred from homology"/>